<comment type="function">
    <text evidence="1">Forms part of the ribosomal stalk which helps the ribosome interact with GTP-bound translation factors. Is thus essential for accurate translation.</text>
</comment>
<comment type="subunit">
    <text evidence="1">Homodimer. Part of the ribosomal stalk of the 50S ribosomal subunit. Forms a multimeric L10(L12)X complex, where L10 forms an elongated spine to which 2 to 4 L12 dimers bind in a sequential fashion. Binds GTP-bound translation factors.</text>
</comment>
<comment type="similarity">
    <text evidence="1">Belongs to the bacterial ribosomal protein bL12 family.</text>
</comment>
<proteinExistence type="inferred from homology"/>
<reference key="1">
    <citation type="journal article" date="2005" name="J. Bacteriol.">
        <title>Whole-genome sequencing of Staphylococcus haemolyticus uncovers the extreme plasticity of its genome and the evolution of human-colonizing staphylococcal species.</title>
        <authorList>
            <person name="Takeuchi F."/>
            <person name="Watanabe S."/>
            <person name="Baba T."/>
            <person name="Yuzawa H."/>
            <person name="Ito T."/>
            <person name="Morimoto Y."/>
            <person name="Kuroda M."/>
            <person name="Cui L."/>
            <person name="Takahashi M."/>
            <person name="Ankai A."/>
            <person name="Baba S."/>
            <person name="Fukui S."/>
            <person name="Lee J.C."/>
            <person name="Hiramatsu K."/>
        </authorList>
    </citation>
    <scope>NUCLEOTIDE SEQUENCE [LARGE SCALE GENOMIC DNA]</scope>
    <source>
        <strain>JCSC1435</strain>
    </source>
</reference>
<protein>
    <recommendedName>
        <fullName evidence="1">Large ribosomal subunit protein bL12</fullName>
    </recommendedName>
    <alternativeName>
        <fullName evidence="2">50S ribosomal protein L7/L12</fullName>
    </alternativeName>
</protein>
<keyword id="KW-0687">Ribonucleoprotein</keyword>
<keyword id="KW-0689">Ribosomal protein</keyword>
<accession>Q4L3K1</accession>
<dbReference type="EMBL" id="AP006716">
    <property type="protein sequence ID" value="BAE05776.1"/>
    <property type="molecule type" value="Genomic_DNA"/>
</dbReference>
<dbReference type="RefSeq" id="WP_011276720.1">
    <property type="nucleotide sequence ID" value="NC_007168.1"/>
</dbReference>
<dbReference type="SMR" id="Q4L3K1"/>
<dbReference type="GeneID" id="93781681"/>
<dbReference type="KEGG" id="sha:SH2467"/>
<dbReference type="eggNOG" id="COG0222">
    <property type="taxonomic scope" value="Bacteria"/>
</dbReference>
<dbReference type="HOGENOM" id="CLU_086499_3_2_9"/>
<dbReference type="OrthoDB" id="9811748at2"/>
<dbReference type="Proteomes" id="UP000000543">
    <property type="component" value="Chromosome"/>
</dbReference>
<dbReference type="GO" id="GO:0022625">
    <property type="term" value="C:cytosolic large ribosomal subunit"/>
    <property type="evidence" value="ECO:0007669"/>
    <property type="project" value="TreeGrafter"/>
</dbReference>
<dbReference type="GO" id="GO:0003729">
    <property type="term" value="F:mRNA binding"/>
    <property type="evidence" value="ECO:0007669"/>
    <property type="project" value="TreeGrafter"/>
</dbReference>
<dbReference type="GO" id="GO:0003735">
    <property type="term" value="F:structural constituent of ribosome"/>
    <property type="evidence" value="ECO:0007669"/>
    <property type="project" value="InterPro"/>
</dbReference>
<dbReference type="GO" id="GO:0006412">
    <property type="term" value="P:translation"/>
    <property type="evidence" value="ECO:0007669"/>
    <property type="project" value="UniProtKB-UniRule"/>
</dbReference>
<dbReference type="CDD" id="cd00387">
    <property type="entry name" value="Ribosomal_L7_L12"/>
    <property type="match status" value="1"/>
</dbReference>
<dbReference type="FunFam" id="1.20.5.710:FF:000002">
    <property type="entry name" value="50S ribosomal protein L7/L12"/>
    <property type="match status" value="1"/>
</dbReference>
<dbReference type="FunFam" id="3.30.1390.10:FF:000001">
    <property type="entry name" value="50S ribosomal protein L7/L12"/>
    <property type="match status" value="1"/>
</dbReference>
<dbReference type="Gene3D" id="3.30.1390.10">
    <property type="match status" value="1"/>
</dbReference>
<dbReference type="Gene3D" id="1.20.5.710">
    <property type="entry name" value="Single helix bin"/>
    <property type="match status" value="1"/>
</dbReference>
<dbReference type="HAMAP" id="MF_00368">
    <property type="entry name" value="Ribosomal_bL12"/>
    <property type="match status" value="1"/>
</dbReference>
<dbReference type="InterPro" id="IPR000206">
    <property type="entry name" value="Ribosomal_bL12"/>
</dbReference>
<dbReference type="InterPro" id="IPR013823">
    <property type="entry name" value="Ribosomal_bL12_C"/>
</dbReference>
<dbReference type="InterPro" id="IPR014719">
    <property type="entry name" value="Ribosomal_bL12_C/ClpS-like"/>
</dbReference>
<dbReference type="InterPro" id="IPR008932">
    <property type="entry name" value="Ribosomal_bL12_oligo"/>
</dbReference>
<dbReference type="InterPro" id="IPR036235">
    <property type="entry name" value="Ribosomal_bL12_oligo_N_sf"/>
</dbReference>
<dbReference type="NCBIfam" id="TIGR00855">
    <property type="entry name" value="L12"/>
    <property type="match status" value="1"/>
</dbReference>
<dbReference type="PANTHER" id="PTHR45987">
    <property type="entry name" value="39S RIBOSOMAL PROTEIN L12"/>
    <property type="match status" value="1"/>
</dbReference>
<dbReference type="PANTHER" id="PTHR45987:SF4">
    <property type="entry name" value="LARGE RIBOSOMAL SUBUNIT PROTEIN BL12M"/>
    <property type="match status" value="1"/>
</dbReference>
<dbReference type="Pfam" id="PF00542">
    <property type="entry name" value="Ribosomal_L12"/>
    <property type="match status" value="1"/>
</dbReference>
<dbReference type="Pfam" id="PF16320">
    <property type="entry name" value="Ribosomal_L12_N"/>
    <property type="match status" value="1"/>
</dbReference>
<dbReference type="SUPFAM" id="SSF54736">
    <property type="entry name" value="ClpS-like"/>
    <property type="match status" value="1"/>
</dbReference>
<dbReference type="SUPFAM" id="SSF48300">
    <property type="entry name" value="Ribosomal protein L7/12, oligomerisation (N-terminal) domain"/>
    <property type="match status" value="1"/>
</dbReference>
<name>RL7_STAHJ</name>
<gene>
    <name evidence="1" type="primary">rplL</name>
    <name type="ordered locus">SH2467</name>
</gene>
<sequence>MANQEQIIEAIKEMSVLELNDLVKAIEEEFGVTAAAPVAAAGAAGGGDAAAEKTEFDVELTSAGSSKIKVVKAVKEATGLGLKDAKELVDNAPKVIKEGVAKEEAEKLKEQLEEVGATVELK</sequence>
<feature type="chain" id="PRO_0000157583" description="Large ribosomal subunit protein bL12">
    <location>
        <begin position="1"/>
        <end position="122"/>
    </location>
</feature>
<evidence type="ECO:0000255" key="1">
    <source>
        <dbReference type="HAMAP-Rule" id="MF_00368"/>
    </source>
</evidence>
<evidence type="ECO:0000305" key="2"/>
<organism>
    <name type="scientific">Staphylococcus haemolyticus (strain JCSC1435)</name>
    <dbReference type="NCBI Taxonomy" id="279808"/>
    <lineage>
        <taxon>Bacteria</taxon>
        <taxon>Bacillati</taxon>
        <taxon>Bacillota</taxon>
        <taxon>Bacilli</taxon>
        <taxon>Bacillales</taxon>
        <taxon>Staphylococcaceae</taxon>
        <taxon>Staphylococcus</taxon>
    </lineage>
</organism>